<protein>
    <recommendedName>
        <fullName>Serine/threonine-protein kinase 11-interacting protein</fullName>
    </recommendedName>
    <alternativeName>
        <fullName>LKB1-interacting protein 1</fullName>
    </alternativeName>
</protein>
<gene>
    <name type="primary">Stk11ip</name>
    <name type="synonym">Lip1</name>
    <name type="synonym">Lkb1ip</name>
</gene>
<sequence>MTTAPRDSVVWKLAGLLRESGDAVLSGCSTLSLLTATLQQLNRVFELYLGPWGPGQTGFVALPSHPADSPVILQLQFLFDVLQKTLSLKLVHIPGVGLPGPIKIFPFKSLRQLELRGVPIHSLCGLRGIYSQLESLVCNRSIQALEELLSACGGDLCSALPWLALLSADFSYNALRSLDSSLRLLSALRFLNLSHNHLQDCKGFLMDLCELYHLDISYNHLRLVPRVGPSGAALGTLILRANELRSLQGLEQLKNLRHLDVAYNLLEGHTELAPLWLLAELRKLYLEGNPLWFHPAHRAATAQYLSPRARDAAHGFLLDGKVLSLKDLQQTSDSSGLGPVIQPLSWPVGSTTETSGGPELSDSLSSGGIVAQAPLRKVKSRVRVRRASISEPSDTDPELRTLDPSPAGWFVQQHRELELLASFRERFGCDWLQYRSHLETMGSSPLSTTKTPALSTPPLDVQNLETVCSPPAIEDDTKESPEKVSEEGRVEPEPQEEEREEQDKEEGSREDLEEEEEQEQKAVEAELCRPMLVCPLQGLGGVQGKECFLRVTSAHLFEVELQAARTLERLELQSLVAAELESETETQGEPVSEGSGPFPGAPVLVLRFSYICPDRQLRRYAVLEPEAREAVQELLAVLTPFTSVKEQQPGANKDPQGARFQCLRCSCEFKPEESRLGLESDEGWKPLFQNTESPVVCPNCGSDHVVLLAVSGEVPNREQNQEEQSADSACDLADHGGCPSRPDGIPPQTSISHDRSSWSLSPSPGCSGFRSVDHRLRLFLDVEVFSDSEEEFQCCIKVPVVLAGHTEEFPCLVVVSNHMLYLLKVLGAICGPPASWLQPTLAIALQDLSGMELGLAGQSLRLEWAAGTGSCVLLPRDARQCRAFLEELTGVLQSLPRTQRNCISATEEEVTPQHRLWPLLGKDPSAEVPQFFYLRAFLAEGSSTCPVSLLLTLSTLYLLDEDPGGSHAESPLPVVSDETSEQPASLGPGPSLQVREQQPLSCLSSVQLYRTSPLDLRLIFYDEVSRLESFWALHVVCGEQLTALLAWIREPWEELFSIGLRTVTQEALDLDR</sequence>
<organism>
    <name type="scientific">Mus musculus</name>
    <name type="common">Mouse</name>
    <dbReference type="NCBI Taxonomy" id="10090"/>
    <lineage>
        <taxon>Eukaryota</taxon>
        <taxon>Metazoa</taxon>
        <taxon>Chordata</taxon>
        <taxon>Craniata</taxon>
        <taxon>Vertebrata</taxon>
        <taxon>Euteleostomi</taxon>
        <taxon>Mammalia</taxon>
        <taxon>Eutheria</taxon>
        <taxon>Euarchontoglires</taxon>
        <taxon>Glires</taxon>
        <taxon>Rodentia</taxon>
        <taxon>Myomorpha</taxon>
        <taxon>Muroidea</taxon>
        <taxon>Muridae</taxon>
        <taxon>Murinae</taxon>
        <taxon>Mus</taxon>
        <taxon>Mus</taxon>
    </lineage>
</organism>
<accession>Q3TAA7</accession>
<accession>Q6P7J8</accession>
<accession>Q9DBT7</accession>
<name>S11IP_MOUSE</name>
<evidence type="ECO:0000250" key="1"/>
<evidence type="ECO:0000250" key="2">
    <source>
        <dbReference type="UniProtKB" id="Q8N1F8"/>
    </source>
</evidence>
<evidence type="ECO:0000256" key="3">
    <source>
        <dbReference type="SAM" id="MobiDB-lite"/>
    </source>
</evidence>
<evidence type="ECO:0000269" key="4">
    <source>
    </source>
</evidence>
<evidence type="ECO:0000305" key="5"/>
<evidence type="ECO:0007744" key="6">
    <source>
    </source>
</evidence>
<dbReference type="EMBL" id="AK004757">
    <property type="protein sequence ID" value="BAB23538.1"/>
    <property type="molecule type" value="mRNA"/>
</dbReference>
<dbReference type="EMBL" id="AK156122">
    <property type="protein sequence ID" value="BAE33593.1"/>
    <property type="molecule type" value="mRNA"/>
</dbReference>
<dbReference type="EMBL" id="AK171989">
    <property type="protein sequence ID" value="BAE42762.1"/>
    <property type="molecule type" value="mRNA"/>
</dbReference>
<dbReference type="EMBL" id="BC061635">
    <property type="protein sequence ID" value="AAH61635.1"/>
    <property type="molecule type" value="mRNA"/>
</dbReference>
<dbReference type="CCDS" id="CCDS15079.1"/>
<dbReference type="RefSeq" id="NP_001419843.1">
    <property type="nucleotide sequence ID" value="NM_001432914.1"/>
</dbReference>
<dbReference type="RefSeq" id="NP_082162.3">
    <property type="nucleotide sequence ID" value="NM_027886.3"/>
</dbReference>
<dbReference type="BioGRID" id="214885">
    <property type="interactions" value="2"/>
</dbReference>
<dbReference type="FunCoup" id="Q3TAA7">
    <property type="interactions" value="4018"/>
</dbReference>
<dbReference type="IntAct" id="Q3TAA7">
    <property type="interactions" value="1"/>
</dbReference>
<dbReference type="MINT" id="Q3TAA7"/>
<dbReference type="STRING" id="10090.ENSMUSP00000027414"/>
<dbReference type="iPTMnet" id="Q3TAA7"/>
<dbReference type="PhosphoSitePlus" id="Q3TAA7"/>
<dbReference type="jPOST" id="Q3TAA7"/>
<dbReference type="PaxDb" id="10090-ENSMUSP00000027414"/>
<dbReference type="PeptideAtlas" id="Q3TAA7"/>
<dbReference type="ProteomicsDB" id="253332"/>
<dbReference type="Pumba" id="Q3TAA7"/>
<dbReference type="Antibodypedia" id="34344">
    <property type="antibodies" value="140 antibodies from 26 providers"/>
</dbReference>
<dbReference type="DNASU" id="71728"/>
<dbReference type="Ensembl" id="ENSMUST00000027414.16">
    <property type="protein sequence ID" value="ENSMUSP00000027414.10"/>
    <property type="gene ID" value="ENSMUSG00000026213.16"/>
</dbReference>
<dbReference type="Ensembl" id="ENSMUST00000113553.2">
    <property type="protein sequence ID" value="ENSMUSP00000109182.2"/>
    <property type="gene ID" value="ENSMUSG00000026213.16"/>
</dbReference>
<dbReference type="GeneID" id="71728"/>
<dbReference type="KEGG" id="mmu:71728"/>
<dbReference type="UCSC" id="uc007bpt.2">
    <property type="organism name" value="mouse"/>
</dbReference>
<dbReference type="AGR" id="MGI:1918978"/>
<dbReference type="CTD" id="114790"/>
<dbReference type="MGI" id="MGI:1918978">
    <property type="gene designation" value="Stk11ip"/>
</dbReference>
<dbReference type="VEuPathDB" id="HostDB:ENSMUSG00000026213"/>
<dbReference type="eggNOG" id="KOG1859">
    <property type="taxonomic scope" value="Eukaryota"/>
</dbReference>
<dbReference type="GeneTree" id="ENSGT00940000158471"/>
<dbReference type="HOGENOM" id="CLU_008018_0_0_1"/>
<dbReference type="InParanoid" id="Q3TAA7"/>
<dbReference type="OMA" id="MVKFGRQ"/>
<dbReference type="OrthoDB" id="7451790at2759"/>
<dbReference type="PhylomeDB" id="Q3TAA7"/>
<dbReference type="TreeFam" id="TF326448"/>
<dbReference type="Reactome" id="R-MMU-6798695">
    <property type="pathway name" value="Neutrophil degranulation"/>
</dbReference>
<dbReference type="BioGRID-ORCS" id="71728">
    <property type="hits" value="1 hit in 78 CRISPR screens"/>
</dbReference>
<dbReference type="ChiTaRS" id="Stk11ip">
    <property type="organism name" value="mouse"/>
</dbReference>
<dbReference type="PRO" id="PR:Q3TAA7"/>
<dbReference type="Proteomes" id="UP000000589">
    <property type="component" value="Chromosome 1"/>
</dbReference>
<dbReference type="RNAct" id="Q3TAA7">
    <property type="molecule type" value="protein"/>
</dbReference>
<dbReference type="Bgee" id="ENSMUSG00000026213">
    <property type="expression patterns" value="Expressed in retinal neural layer and 191 other cell types or tissues"/>
</dbReference>
<dbReference type="GO" id="GO:0005737">
    <property type="term" value="C:cytoplasm"/>
    <property type="evidence" value="ECO:0007669"/>
    <property type="project" value="UniProtKB-SubCell"/>
</dbReference>
<dbReference type="GO" id="GO:0043231">
    <property type="term" value="C:intracellular membrane-bounded organelle"/>
    <property type="evidence" value="ECO:0007669"/>
    <property type="project" value="Ensembl"/>
</dbReference>
<dbReference type="GO" id="GO:0019901">
    <property type="term" value="F:protein kinase binding"/>
    <property type="evidence" value="ECO:0007669"/>
    <property type="project" value="Ensembl"/>
</dbReference>
<dbReference type="GO" id="GO:0008104">
    <property type="term" value="P:protein localization"/>
    <property type="evidence" value="ECO:0007669"/>
    <property type="project" value="Ensembl"/>
</dbReference>
<dbReference type="FunFam" id="3.80.10.10:FF:000527">
    <property type="entry name" value="Serine/threonine kinase 11 interacting protein"/>
    <property type="match status" value="1"/>
</dbReference>
<dbReference type="FunFam" id="3.80.10.10:FF:001449">
    <property type="entry name" value="Serine/threonine kinase 11 interacting protein"/>
    <property type="match status" value="1"/>
</dbReference>
<dbReference type="Gene3D" id="3.80.10.10">
    <property type="entry name" value="Ribonuclease Inhibitor"/>
    <property type="match status" value="1"/>
</dbReference>
<dbReference type="InterPro" id="IPR031782">
    <property type="entry name" value="LIP1_N"/>
</dbReference>
<dbReference type="InterPro" id="IPR032675">
    <property type="entry name" value="LRR_dom_sf"/>
</dbReference>
<dbReference type="PANTHER" id="PTHR15454">
    <property type="entry name" value="NISCHARIN RELATED"/>
    <property type="match status" value="1"/>
</dbReference>
<dbReference type="PANTHER" id="PTHR15454:SF69">
    <property type="entry name" value="SERINE_THREONINE-PROTEIN KINASE 11-INTERACTING PROTEIN"/>
    <property type="match status" value="1"/>
</dbReference>
<dbReference type="Pfam" id="PF15904">
    <property type="entry name" value="LIP1"/>
    <property type="match status" value="1"/>
</dbReference>
<dbReference type="Pfam" id="PF25357">
    <property type="entry name" value="PH_S11IP"/>
    <property type="match status" value="1"/>
</dbReference>
<dbReference type="SUPFAM" id="SSF52058">
    <property type="entry name" value="L domain-like"/>
    <property type="match status" value="1"/>
</dbReference>
<proteinExistence type="evidence at protein level"/>
<feature type="chain" id="PRO_0000317463" description="Serine/threonine-protein kinase 11-interacting protein">
    <location>
        <begin position="1"/>
        <end position="1072"/>
    </location>
</feature>
<feature type="repeat" description="LRR 1">
    <location>
        <begin position="109"/>
        <end position="130"/>
    </location>
</feature>
<feature type="repeat" description="LRR 2">
    <location>
        <begin position="132"/>
        <end position="152"/>
    </location>
</feature>
<feature type="repeat" description="LRR 3">
    <location>
        <begin position="164"/>
        <end position="185"/>
    </location>
</feature>
<feature type="repeat" description="LRR 4">
    <location>
        <begin position="187"/>
        <end position="209"/>
    </location>
</feature>
<feature type="repeat" description="LRR 5">
    <location>
        <begin position="210"/>
        <end position="231"/>
    </location>
</feature>
<feature type="repeat" description="LRR 6">
    <location>
        <begin position="233"/>
        <end position="254"/>
    </location>
</feature>
<feature type="repeat" description="LRR 7">
    <location>
        <begin position="255"/>
        <end position="276"/>
    </location>
</feature>
<feature type="repeat" description="LRR 8">
    <location>
        <begin position="280"/>
        <end position="301"/>
    </location>
</feature>
<feature type="region of interest" description="Disordered" evidence="3">
    <location>
        <begin position="333"/>
        <end position="366"/>
    </location>
</feature>
<feature type="region of interest" description="Disordered" evidence="3">
    <location>
        <begin position="441"/>
        <end position="522"/>
    </location>
</feature>
<feature type="region of interest" description="Disordered" evidence="3">
    <location>
        <begin position="741"/>
        <end position="762"/>
    </location>
</feature>
<feature type="region of interest" description="Disordered" evidence="3">
    <location>
        <begin position="967"/>
        <end position="993"/>
    </location>
</feature>
<feature type="compositionally biased region" description="Polar residues" evidence="3">
    <location>
        <begin position="441"/>
        <end position="454"/>
    </location>
</feature>
<feature type="compositionally biased region" description="Basic and acidic residues" evidence="3">
    <location>
        <begin position="478"/>
        <end position="492"/>
    </location>
</feature>
<feature type="compositionally biased region" description="Basic and acidic residues" evidence="3">
    <location>
        <begin position="501"/>
        <end position="510"/>
    </location>
</feature>
<feature type="modified residue" description="Phosphoserine" evidence="6">
    <location>
        <position position="388"/>
    </location>
</feature>
<feature type="modified residue" description="Phosphoserine" evidence="6">
    <location>
        <position position="390"/>
    </location>
</feature>
<feature type="modified residue" description="Phosphoserine" evidence="6">
    <location>
        <position position="393"/>
    </location>
</feature>
<feature type="modified residue" description="Phosphoserine" evidence="2">
    <location>
        <position position="757"/>
    </location>
</feature>
<feature type="modified residue" description="Phosphoserine" evidence="6">
    <location>
        <position position="761"/>
    </location>
</feature>
<feature type="modified residue" description="Phosphoserine" evidence="6">
    <location>
        <position position="763"/>
    </location>
</feature>
<feature type="sequence conflict" description="In Ref. 1; BAB23538." evidence="5" ref="1">
    <original>T</original>
    <variation>A</variation>
    <location>
        <position position="57"/>
    </location>
</feature>
<feature type="sequence conflict" description="In Ref. 2; AAH61635." evidence="5" ref="2">
    <original>E</original>
    <variation>D</variation>
    <location>
        <position position="210"/>
    </location>
</feature>
<reference key="1">
    <citation type="journal article" date="2005" name="Science">
        <title>The transcriptional landscape of the mammalian genome.</title>
        <authorList>
            <person name="Carninci P."/>
            <person name="Kasukawa T."/>
            <person name="Katayama S."/>
            <person name="Gough J."/>
            <person name="Frith M.C."/>
            <person name="Maeda N."/>
            <person name="Oyama R."/>
            <person name="Ravasi T."/>
            <person name="Lenhard B."/>
            <person name="Wells C."/>
            <person name="Kodzius R."/>
            <person name="Shimokawa K."/>
            <person name="Bajic V.B."/>
            <person name="Brenner S.E."/>
            <person name="Batalov S."/>
            <person name="Forrest A.R."/>
            <person name="Zavolan M."/>
            <person name="Davis M.J."/>
            <person name="Wilming L.G."/>
            <person name="Aidinis V."/>
            <person name="Allen J.E."/>
            <person name="Ambesi-Impiombato A."/>
            <person name="Apweiler R."/>
            <person name="Aturaliya R.N."/>
            <person name="Bailey T.L."/>
            <person name="Bansal M."/>
            <person name="Baxter L."/>
            <person name="Beisel K.W."/>
            <person name="Bersano T."/>
            <person name="Bono H."/>
            <person name="Chalk A.M."/>
            <person name="Chiu K.P."/>
            <person name="Choudhary V."/>
            <person name="Christoffels A."/>
            <person name="Clutterbuck D.R."/>
            <person name="Crowe M.L."/>
            <person name="Dalla E."/>
            <person name="Dalrymple B.P."/>
            <person name="de Bono B."/>
            <person name="Della Gatta G."/>
            <person name="di Bernardo D."/>
            <person name="Down T."/>
            <person name="Engstrom P."/>
            <person name="Fagiolini M."/>
            <person name="Faulkner G."/>
            <person name="Fletcher C.F."/>
            <person name="Fukushima T."/>
            <person name="Furuno M."/>
            <person name="Futaki S."/>
            <person name="Gariboldi M."/>
            <person name="Georgii-Hemming P."/>
            <person name="Gingeras T.R."/>
            <person name="Gojobori T."/>
            <person name="Green R.E."/>
            <person name="Gustincich S."/>
            <person name="Harbers M."/>
            <person name="Hayashi Y."/>
            <person name="Hensch T.K."/>
            <person name="Hirokawa N."/>
            <person name="Hill D."/>
            <person name="Huminiecki L."/>
            <person name="Iacono M."/>
            <person name="Ikeo K."/>
            <person name="Iwama A."/>
            <person name="Ishikawa T."/>
            <person name="Jakt M."/>
            <person name="Kanapin A."/>
            <person name="Katoh M."/>
            <person name="Kawasawa Y."/>
            <person name="Kelso J."/>
            <person name="Kitamura H."/>
            <person name="Kitano H."/>
            <person name="Kollias G."/>
            <person name="Krishnan S.P."/>
            <person name="Kruger A."/>
            <person name="Kummerfeld S.K."/>
            <person name="Kurochkin I.V."/>
            <person name="Lareau L.F."/>
            <person name="Lazarevic D."/>
            <person name="Lipovich L."/>
            <person name="Liu J."/>
            <person name="Liuni S."/>
            <person name="McWilliam S."/>
            <person name="Madan Babu M."/>
            <person name="Madera M."/>
            <person name="Marchionni L."/>
            <person name="Matsuda H."/>
            <person name="Matsuzawa S."/>
            <person name="Miki H."/>
            <person name="Mignone F."/>
            <person name="Miyake S."/>
            <person name="Morris K."/>
            <person name="Mottagui-Tabar S."/>
            <person name="Mulder N."/>
            <person name="Nakano N."/>
            <person name="Nakauchi H."/>
            <person name="Ng P."/>
            <person name="Nilsson R."/>
            <person name="Nishiguchi S."/>
            <person name="Nishikawa S."/>
            <person name="Nori F."/>
            <person name="Ohara O."/>
            <person name="Okazaki Y."/>
            <person name="Orlando V."/>
            <person name="Pang K.C."/>
            <person name="Pavan W.J."/>
            <person name="Pavesi G."/>
            <person name="Pesole G."/>
            <person name="Petrovsky N."/>
            <person name="Piazza S."/>
            <person name="Reed J."/>
            <person name="Reid J.F."/>
            <person name="Ring B.Z."/>
            <person name="Ringwald M."/>
            <person name="Rost B."/>
            <person name="Ruan Y."/>
            <person name="Salzberg S.L."/>
            <person name="Sandelin A."/>
            <person name="Schneider C."/>
            <person name="Schoenbach C."/>
            <person name="Sekiguchi K."/>
            <person name="Semple C.A."/>
            <person name="Seno S."/>
            <person name="Sessa L."/>
            <person name="Sheng Y."/>
            <person name="Shibata Y."/>
            <person name="Shimada H."/>
            <person name="Shimada K."/>
            <person name="Silva D."/>
            <person name="Sinclair B."/>
            <person name="Sperling S."/>
            <person name="Stupka E."/>
            <person name="Sugiura K."/>
            <person name="Sultana R."/>
            <person name="Takenaka Y."/>
            <person name="Taki K."/>
            <person name="Tammoja K."/>
            <person name="Tan S.L."/>
            <person name="Tang S."/>
            <person name="Taylor M.S."/>
            <person name="Tegner J."/>
            <person name="Teichmann S.A."/>
            <person name="Ueda H.R."/>
            <person name="van Nimwegen E."/>
            <person name="Verardo R."/>
            <person name="Wei C.L."/>
            <person name="Yagi K."/>
            <person name="Yamanishi H."/>
            <person name="Zabarovsky E."/>
            <person name="Zhu S."/>
            <person name="Zimmer A."/>
            <person name="Hide W."/>
            <person name="Bult C."/>
            <person name="Grimmond S.M."/>
            <person name="Teasdale R.D."/>
            <person name="Liu E.T."/>
            <person name="Brusic V."/>
            <person name="Quackenbush J."/>
            <person name="Wahlestedt C."/>
            <person name="Mattick J.S."/>
            <person name="Hume D.A."/>
            <person name="Kai C."/>
            <person name="Sasaki D."/>
            <person name="Tomaru Y."/>
            <person name="Fukuda S."/>
            <person name="Kanamori-Katayama M."/>
            <person name="Suzuki M."/>
            <person name="Aoki J."/>
            <person name="Arakawa T."/>
            <person name="Iida J."/>
            <person name="Imamura K."/>
            <person name="Itoh M."/>
            <person name="Kato T."/>
            <person name="Kawaji H."/>
            <person name="Kawagashira N."/>
            <person name="Kawashima T."/>
            <person name="Kojima M."/>
            <person name="Kondo S."/>
            <person name="Konno H."/>
            <person name="Nakano K."/>
            <person name="Ninomiya N."/>
            <person name="Nishio T."/>
            <person name="Okada M."/>
            <person name="Plessy C."/>
            <person name="Shibata K."/>
            <person name="Shiraki T."/>
            <person name="Suzuki S."/>
            <person name="Tagami M."/>
            <person name="Waki K."/>
            <person name="Watahiki A."/>
            <person name="Okamura-Oho Y."/>
            <person name="Suzuki H."/>
            <person name="Kawai J."/>
            <person name="Hayashizaki Y."/>
        </authorList>
    </citation>
    <scope>NUCLEOTIDE SEQUENCE [LARGE SCALE MRNA]</scope>
    <source>
        <strain>C57BL/6J</strain>
        <strain>NOD</strain>
        <tissue>Lung</tissue>
        <tissue>Spleen</tissue>
    </source>
</reference>
<reference key="2">
    <citation type="journal article" date="2004" name="Genome Res.">
        <title>The status, quality, and expansion of the NIH full-length cDNA project: the Mammalian Gene Collection (MGC).</title>
        <authorList>
            <consortium name="The MGC Project Team"/>
        </authorList>
    </citation>
    <scope>NUCLEOTIDE SEQUENCE [LARGE SCALE MRNA]</scope>
    <source>
        <strain>FVB/N</strain>
        <tissue>Colon</tissue>
    </source>
</reference>
<reference key="3">
    <citation type="journal article" date="2001" name="Hum. Mol. Genet.">
        <title>LIP1, a cytoplasmic protein functionally linked to the Peutz-Jeghers syndrome kinase LKB1.</title>
        <authorList>
            <person name="Smith D.P."/>
            <person name="Rayter S.I."/>
            <person name="Niederlander C."/>
            <person name="Spicer J."/>
            <person name="Jones C.M."/>
            <person name="Ashworth A."/>
        </authorList>
    </citation>
    <scope>INTERACTION WITH STK11/LKB1</scope>
</reference>
<reference key="4">
    <citation type="journal article" date="2010" name="Cell">
        <title>A tissue-specific atlas of mouse protein phosphorylation and expression.</title>
        <authorList>
            <person name="Huttlin E.L."/>
            <person name="Jedrychowski M.P."/>
            <person name="Elias J.E."/>
            <person name="Goswami T."/>
            <person name="Rad R."/>
            <person name="Beausoleil S.A."/>
            <person name="Villen J."/>
            <person name="Haas W."/>
            <person name="Sowa M.E."/>
            <person name="Gygi S.P."/>
        </authorList>
    </citation>
    <scope>PHOSPHORYLATION [LARGE SCALE ANALYSIS] AT SER-388; SER-390; SER-393; SER-761 AND SER-763</scope>
    <scope>IDENTIFICATION BY MASS SPECTROMETRY [LARGE SCALE ANALYSIS]</scope>
    <source>
        <tissue>Kidney</tissue>
        <tissue>Spleen</tissue>
        <tissue>Testis</tissue>
    </source>
</reference>
<keyword id="KW-0963">Cytoplasm</keyword>
<keyword id="KW-0433">Leucine-rich repeat</keyword>
<keyword id="KW-0597">Phosphoprotein</keyword>
<keyword id="KW-1185">Reference proteome</keyword>
<keyword id="KW-0677">Repeat</keyword>
<comment type="function">
    <text evidence="1">May regulate STK11/LKB1 function by controlling its subcellular localization.</text>
</comment>
<comment type="subunit">
    <text evidence="1 4">Found in a ternary complex composed of STK11/LKB1, STK11IP and SMAD4 (By similarity). Interacts with SMAD4 (By similarity). Interacts with STK11/LKB1.</text>
</comment>
<comment type="subcellular location">
    <subcellularLocation>
        <location evidence="1">Cytoplasm</location>
    </subcellularLocation>
    <text evidence="1">Some cells show granular or punctuate expression. Colocalizes with STK11/LKB1 and SMAD4 in granular or punctuate structures (By similarity).</text>
</comment>
<comment type="similarity">
    <text evidence="5">Belongs to the STK11IP family.</text>
</comment>